<accession>Q0VE29</accession>
<protein>
    <recommendedName>
        <fullName>Sterile alpha motif domain-containing protein 12</fullName>
        <shortName>SAM domain-containing protein 12</shortName>
    </recommendedName>
</protein>
<dbReference type="EMBL" id="BC119385">
    <property type="protein sequence ID" value="AAI19386.1"/>
    <property type="molecule type" value="mRNA"/>
</dbReference>
<dbReference type="EMBL" id="BC119383">
    <property type="protein sequence ID" value="AAI19384.1"/>
    <property type="molecule type" value="mRNA"/>
</dbReference>
<dbReference type="CCDS" id="CCDS37072.1"/>
<dbReference type="RefSeq" id="NP_796199.1">
    <property type="nucleotide sequence ID" value="NM_177225.4"/>
</dbReference>
<dbReference type="PDB" id="9K1L">
    <property type="method" value="X-ray"/>
    <property type="resolution" value="2.85 A"/>
    <property type="chains" value="B=78-161"/>
</dbReference>
<dbReference type="PDBsum" id="9K1L"/>
<dbReference type="SMR" id="Q0VE29"/>
<dbReference type="FunCoup" id="Q0VE29">
    <property type="interactions" value="92"/>
</dbReference>
<dbReference type="STRING" id="10090.ENSMUSP00000077741"/>
<dbReference type="iPTMnet" id="Q0VE29"/>
<dbReference type="PhosphoSitePlus" id="Q0VE29"/>
<dbReference type="PaxDb" id="10090-ENSMUSP00000077741"/>
<dbReference type="ProteomicsDB" id="256830"/>
<dbReference type="Antibodypedia" id="13629">
    <property type="antibodies" value="69 antibodies from 14 providers"/>
</dbReference>
<dbReference type="Ensembl" id="ENSMUST00000078673.14">
    <property type="protein sequence ID" value="ENSMUSP00000077741.7"/>
    <property type="gene ID" value="ENSMUSG00000058656.14"/>
</dbReference>
<dbReference type="GeneID" id="320679"/>
<dbReference type="KEGG" id="mmu:320679"/>
<dbReference type="UCSC" id="uc007vri.1">
    <property type="organism name" value="mouse"/>
</dbReference>
<dbReference type="AGR" id="MGI:2444518"/>
<dbReference type="CTD" id="401474"/>
<dbReference type="MGI" id="MGI:2444518">
    <property type="gene designation" value="Samd12"/>
</dbReference>
<dbReference type="VEuPathDB" id="HostDB:ENSMUSG00000058656"/>
<dbReference type="eggNOG" id="ENOG502RXXU">
    <property type="taxonomic scope" value="Eukaryota"/>
</dbReference>
<dbReference type="GeneTree" id="ENSGT00390000008161"/>
<dbReference type="HOGENOM" id="CLU_105476_0_0_1"/>
<dbReference type="InParanoid" id="Q0VE29"/>
<dbReference type="OMA" id="RQRVPHK"/>
<dbReference type="OrthoDB" id="434324at2759"/>
<dbReference type="PhylomeDB" id="Q0VE29"/>
<dbReference type="TreeFam" id="TF325918"/>
<dbReference type="BioGRID-ORCS" id="320679">
    <property type="hits" value="2 hits in 76 CRISPR screens"/>
</dbReference>
<dbReference type="ChiTaRS" id="Samd12">
    <property type="organism name" value="mouse"/>
</dbReference>
<dbReference type="PRO" id="PR:Q0VE29"/>
<dbReference type="Proteomes" id="UP000000589">
    <property type="component" value="Chromosome 15"/>
</dbReference>
<dbReference type="RNAct" id="Q0VE29">
    <property type="molecule type" value="protein"/>
</dbReference>
<dbReference type="Bgee" id="ENSMUSG00000058656">
    <property type="expression patterns" value="Expressed in lumbar dorsal root ganglion and 137 other cell types or tissues"/>
</dbReference>
<dbReference type="ExpressionAtlas" id="Q0VE29">
    <property type="expression patterns" value="baseline and differential"/>
</dbReference>
<dbReference type="CDD" id="cd09510">
    <property type="entry name" value="SAM_aveugle-like"/>
    <property type="match status" value="1"/>
</dbReference>
<dbReference type="Gene3D" id="1.10.150.50">
    <property type="entry name" value="Transcription Factor, Ets-1"/>
    <property type="match status" value="1"/>
</dbReference>
<dbReference type="InterPro" id="IPR039144">
    <property type="entry name" value="Aveugle-like_SAM_dom"/>
</dbReference>
<dbReference type="InterPro" id="IPR001660">
    <property type="entry name" value="SAM"/>
</dbReference>
<dbReference type="InterPro" id="IPR013761">
    <property type="entry name" value="SAM/pointed_sf"/>
</dbReference>
<dbReference type="InterPro" id="IPR052268">
    <property type="entry name" value="SAM_domain-containing_protein"/>
</dbReference>
<dbReference type="PANTHER" id="PTHR20843">
    <property type="entry name" value="STERILE ALPHA MOTIF DOMAIN CONTAINING PROTEIN 10"/>
    <property type="match status" value="1"/>
</dbReference>
<dbReference type="PANTHER" id="PTHR20843:SF2">
    <property type="entry name" value="STERILE ALPHA MOTIF DOMAIN-CONTAINING PROTEIN 12"/>
    <property type="match status" value="1"/>
</dbReference>
<dbReference type="Pfam" id="PF07647">
    <property type="entry name" value="SAM_2"/>
    <property type="match status" value="1"/>
</dbReference>
<dbReference type="SMART" id="SM00454">
    <property type="entry name" value="SAM"/>
    <property type="match status" value="1"/>
</dbReference>
<dbReference type="SUPFAM" id="SSF47769">
    <property type="entry name" value="SAM/Pointed domain"/>
    <property type="match status" value="1"/>
</dbReference>
<dbReference type="PROSITE" id="PS50105">
    <property type="entry name" value="SAM_DOMAIN"/>
    <property type="match status" value="1"/>
</dbReference>
<evidence type="ECO:0000255" key="1">
    <source>
        <dbReference type="PROSITE-ProRule" id="PRU00184"/>
    </source>
</evidence>
<evidence type="ECO:0000256" key="2">
    <source>
        <dbReference type="SAM" id="MobiDB-lite"/>
    </source>
</evidence>
<organism>
    <name type="scientific">Mus musculus</name>
    <name type="common">Mouse</name>
    <dbReference type="NCBI Taxonomy" id="10090"/>
    <lineage>
        <taxon>Eukaryota</taxon>
        <taxon>Metazoa</taxon>
        <taxon>Chordata</taxon>
        <taxon>Craniata</taxon>
        <taxon>Vertebrata</taxon>
        <taxon>Euteleostomi</taxon>
        <taxon>Mammalia</taxon>
        <taxon>Eutheria</taxon>
        <taxon>Euarchontoglires</taxon>
        <taxon>Glires</taxon>
        <taxon>Rodentia</taxon>
        <taxon>Myomorpha</taxon>
        <taxon>Muroidea</taxon>
        <taxon>Muridae</taxon>
        <taxon>Murinae</taxon>
        <taxon>Mus</taxon>
        <taxon>Mus</taxon>
    </lineage>
</organism>
<reference key="1">
    <citation type="journal article" date="2004" name="Genome Res.">
        <title>The status, quality, and expansion of the NIH full-length cDNA project: the Mammalian Gene Collection (MGC).</title>
        <authorList>
            <consortium name="The MGC Project Team"/>
        </authorList>
    </citation>
    <scope>NUCLEOTIDE SEQUENCE [LARGE SCALE MRNA]</scope>
    <source>
        <tissue>Brain</tissue>
    </source>
</reference>
<feature type="chain" id="PRO_0000279503" description="Sterile alpha motif domain-containing protein 12">
    <location>
        <begin position="1"/>
        <end position="161"/>
    </location>
</feature>
<feature type="domain" description="SAM" evidence="1">
    <location>
        <begin position="77"/>
        <end position="143"/>
    </location>
</feature>
<feature type="region of interest" description="Disordered" evidence="2">
    <location>
        <begin position="44"/>
        <end position="64"/>
    </location>
</feature>
<gene>
    <name type="primary">Samd12</name>
</gene>
<name>SAM12_MOUSE</name>
<sequence length="161" mass="18245">MAVEALHCGLNPRGIDHSAHADGIKLQIEGEGVESQSIKNRTFQKVPDQKGTPKRLQGEAETAKSATVKLSKPVALWTQQDVCKWLKKHCPNQYQLYSESFKQHDITGRALLRLTDKKLERMGIAQENQRQHILQQVLQLKVREEVRNLQLLTQASVECSP</sequence>
<keyword id="KW-0002">3D-structure</keyword>
<keyword id="KW-1185">Reference proteome</keyword>
<proteinExistence type="evidence at protein level"/>